<proteinExistence type="inferred from homology"/>
<gene>
    <name evidence="1" type="primary">nadD</name>
    <name type="ordered locus">EcolC_3006</name>
</gene>
<comment type="function">
    <text evidence="1">Catalyzes the reversible adenylation of nicotinate mononucleotide (NaMN) to nicotinic acid adenine dinucleotide (NaAD).</text>
</comment>
<comment type="catalytic activity">
    <reaction evidence="1">
        <text>nicotinate beta-D-ribonucleotide + ATP + H(+) = deamido-NAD(+) + diphosphate</text>
        <dbReference type="Rhea" id="RHEA:22860"/>
        <dbReference type="ChEBI" id="CHEBI:15378"/>
        <dbReference type="ChEBI" id="CHEBI:30616"/>
        <dbReference type="ChEBI" id="CHEBI:33019"/>
        <dbReference type="ChEBI" id="CHEBI:57502"/>
        <dbReference type="ChEBI" id="CHEBI:58437"/>
        <dbReference type="EC" id="2.7.7.18"/>
    </reaction>
</comment>
<comment type="pathway">
    <text evidence="1">Cofactor biosynthesis; NAD(+) biosynthesis; deamido-NAD(+) from nicotinate D-ribonucleotide: step 1/1.</text>
</comment>
<comment type="similarity">
    <text evidence="1">Belongs to the NadD family.</text>
</comment>
<evidence type="ECO:0000255" key="1">
    <source>
        <dbReference type="HAMAP-Rule" id="MF_00244"/>
    </source>
</evidence>
<keyword id="KW-0067">ATP-binding</keyword>
<keyword id="KW-0520">NAD</keyword>
<keyword id="KW-0547">Nucleotide-binding</keyword>
<keyword id="KW-0548">Nucleotidyltransferase</keyword>
<keyword id="KW-0662">Pyridine nucleotide biosynthesis</keyword>
<keyword id="KW-0808">Transferase</keyword>
<protein>
    <recommendedName>
        <fullName evidence="1">Probable nicotinate-nucleotide adenylyltransferase</fullName>
        <ecNumber evidence="1">2.7.7.18</ecNumber>
    </recommendedName>
    <alternativeName>
        <fullName evidence="1">Deamido-NAD(+) diphosphorylase</fullName>
    </alternativeName>
    <alternativeName>
        <fullName evidence="1">Deamido-NAD(+) pyrophosphorylase</fullName>
    </alternativeName>
    <alternativeName>
        <fullName evidence="1">Nicotinate mononucleotide adenylyltransferase</fullName>
        <shortName evidence="1">NaMN adenylyltransferase</shortName>
    </alternativeName>
</protein>
<organism>
    <name type="scientific">Escherichia coli (strain ATCC 8739 / DSM 1576 / NBRC 3972 / NCIMB 8545 / WDCM 00012 / Crooks)</name>
    <dbReference type="NCBI Taxonomy" id="481805"/>
    <lineage>
        <taxon>Bacteria</taxon>
        <taxon>Pseudomonadati</taxon>
        <taxon>Pseudomonadota</taxon>
        <taxon>Gammaproteobacteria</taxon>
        <taxon>Enterobacterales</taxon>
        <taxon>Enterobacteriaceae</taxon>
        <taxon>Escherichia</taxon>
    </lineage>
</organism>
<dbReference type="EC" id="2.7.7.18" evidence="1"/>
<dbReference type="EMBL" id="CP000946">
    <property type="protein sequence ID" value="ACA78631.1"/>
    <property type="molecule type" value="Genomic_DNA"/>
</dbReference>
<dbReference type="RefSeq" id="WP_000838889.1">
    <property type="nucleotide sequence ID" value="NZ_MTFT01000005.1"/>
</dbReference>
<dbReference type="SMR" id="B1IYG9"/>
<dbReference type="GeneID" id="93776843"/>
<dbReference type="KEGG" id="ecl:EcolC_3006"/>
<dbReference type="HOGENOM" id="CLU_069765_0_0_6"/>
<dbReference type="UniPathway" id="UPA00253">
    <property type="reaction ID" value="UER00332"/>
</dbReference>
<dbReference type="GO" id="GO:0005524">
    <property type="term" value="F:ATP binding"/>
    <property type="evidence" value="ECO:0007669"/>
    <property type="project" value="UniProtKB-KW"/>
</dbReference>
<dbReference type="GO" id="GO:0004515">
    <property type="term" value="F:nicotinate-nucleotide adenylyltransferase activity"/>
    <property type="evidence" value="ECO:0007669"/>
    <property type="project" value="UniProtKB-UniRule"/>
</dbReference>
<dbReference type="GO" id="GO:0009435">
    <property type="term" value="P:NAD biosynthetic process"/>
    <property type="evidence" value="ECO:0007669"/>
    <property type="project" value="UniProtKB-UniRule"/>
</dbReference>
<dbReference type="CDD" id="cd02165">
    <property type="entry name" value="NMNAT"/>
    <property type="match status" value="1"/>
</dbReference>
<dbReference type="FunFam" id="3.40.50.620:FF:000039">
    <property type="entry name" value="Probable nicotinate-nucleotide adenylyltransferase"/>
    <property type="match status" value="1"/>
</dbReference>
<dbReference type="Gene3D" id="3.40.50.620">
    <property type="entry name" value="HUPs"/>
    <property type="match status" value="1"/>
</dbReference>
<dbReference type="HAMAP" id="MF_00244">
    <property type="entry name" value="NaMN_adenylyltr"/>
    <property type="match status" value="1"/>
</dbReference>
<dbReference type="InterPro" id="IPR004821">
    <property type="entry name" value="Cyt_trans-like"/>
</dbReference>
<dbReference type="InterPro" id="IPR005248">
    <property type="entry name" value="NadD/NMNAT"/>
</dbReference>
<dbReference type="InterPro" id="IPR014729">
    <property type="entry name" value="Rossmann-like_a/b/a_fold"/>
</dbReference>
<dbReference type="NCBIfam" id="TIGR00125">
    <property type="entry name" value="cyt_tran_rel"/>
    <property type="match status" value="1"/>
</dbReference>
<dbReference type="NCBIfam" id="TIGR00482">
    <property type="entry name" value="nicotinate (nicotinamide) nucleotide adenylyltransferase"/>
    <property type="match status" value="1"/>
</dbReference>
<dbReference type="NCBIfam" id="NF000839">
    <property type="entry name" value="PRK00071.1-1"/>
    <property type="match status" value="1"/>
</dbReference>
<dbReference type="NCBIfam" id="NF000840">
    <property type="entry name" value="PRK00071.1-3"/>
    <property type="match status" value="1"/>
</dbReference>
<dbReference type="PANTHER" id="PTHR39321">
    <property type="entry name" value="NICOTINATE-NUCLEOTIDE ADENYLYLTRANSFERASE-RELATED"/>
    <property type="match status" value="1"/>
</dbReference>
<dbReference type="PANTHER" id="PTHR39321:SF3">
    <property type="entry name" value="PHOSPHOPANTETHEINE ADENYLYLTRANSFERASE"/>
    <property type="match status" value="1"/>
</dbReference>
<dbReference type="Pfam" id="PF01467">
    <property type="entry name" value="CTP_transf_like"/>
    <property type="match status" value="1"/>
</dbReference>
<dbReference type="SUPFAM" id="SSF52374">
    <property type="entry name" value="Nucleotidylyl transferase"/>
    <property type="match status" value="1"/>
</dbReference>
<sequence>MKSLQALFGGTFDPVHYGHLKPVETLANLIGLTRVTIIPNNVPPHRPQPEANSVQRKHMLELAIADKPLFTLDERELKRNAPSYTAQTLKEWRQEQGPDVPLAFIIGQDSLLTFPTWYEYETILDNAHLIVCRRPGYPLEMAQPQYQQWLEDHLTHNPEDLHLQPAGKIYLAETPWFNISATIIRERLQNGESCEDLLPEPVLTYINQQGLYR</sequence>
<name>NADD_ECOLC</name>
<reference key="1">
    <citation type="submission" date="2008-02" db="EMBL/GenBank/DDBJ databases">
        <title>Complete sequence of Escherichia coli C str. ATCC 8739.</title>
        <authorList>
            <person name="Copeland A."/>
            <person name="Lucas S."/>
            <person name="Lapidus A."/>
            <person name="Glavina del Rio T."/>
            <person name="Dalin E."/>
            <person name="Tice H."/>
            <person name="Bruce D."/>
            <person name="Goodwin L."/>
            <person name="Pitluck S."/>
            <person name="Kiss H."/>
            <person name="Brettin T."/>
            <person name="Detter J.C."/>
            <person name="Han C."/>
            <person name="Kuske C.R."/>
            <person name="Schmutz J."/>
            <person name="Larimer F."/>
            <person name="Land M."/>
            <person name="Hauser L."/>
            <person name="Kyrpides N."/>
            <person name="Mikhailova N."/>
            <person name="Ingram L."/>
            <person name="Richardson P."/>
        </authorList>
    </citation>
    <scope>NUCLEOTIDE SEQUENCE [LARGE SCALE GENOMIC DNA]</scope>
    <source>
        <strain>ATCC 8739 / DSM 1576 / NBRC 3972 / NCIMB 8545 / WDCM 00012 / Crooks</strain>
    </source>
</reference>
<feature type="chain" id="PRO_1000078381" description="Probable nicotinate-nucleotide adenylyltransferase">
    <location>
        <begin position="1"/>
        <end position="213"/>
    </location>
</feature>
<accession>B1IYG9</accession>